<sequence>MLGLSATGVLVGGLWAWIAPPIHAVVAITRAGERVHEYLGSESQNFFIAPFMLLGLLSVLAVVASALMWQWREHRGPQMVAGLSIGLTTAAAIAAGVGALVVRLRYGALDFDTVPLSRGDHALTYVTQAPPVFFARRPLQIALTLMWPAGIASLVYALLAAGTARDDLGGYPAVDPSSNARTEALETPQAPVS</sequence>
<reference key="1">
    <citation type="journal article" date="2002" name="J. Bacteriol.">
        <title>Whole-genome comparison of Mycobacterium tuberculosis clinical and laboratory strains.</title>
        <authorList>
            <person name="Fleischmann R.D."/>
            <person name="Alland D."/>
            <person name="Eisen J.A."/>
            <person name="Carpenter L."/>
            <person name="White O."/>
            <person name="Peterson J.D."/>
            <person name="DeBoy R.T."/>
            <person name="Dodson R.J."/>
            <person name="Gwinn M.L."/>
            <person name="Haft D.H."/>
            <person name="Hickey E.K."/>
            <person name="Kolonay J.F."/>
            <person name="Nelson W.C."/>
            <person name="Umayam L.A."/>
            <person name="Ermolaeva M.D."/>
            <person name="Salzberg S.L."/>
            <person name="Delcher A."/>
            <person name="Utterback T.R."/>
            <person name="Weidman J.F."/>
            <person name="Khouri H.M."/>
            <person name="Gill J."/>
            <person name="Mikula A."/>
            <person name="Bishai W."/>
            <person name="Jacobs W.R. Jr."/>
            <person name="Venter J.C."/>
            <person name="Fraser C.M."/>
        </authorList>
    </citation>
    <scope>NUCLEOTIDE SEQUENCE [LARGE SCALE GENOMIC DNA]</scope>
    <source>
        <strain>CDC 1551 / Oshkosh</strain>
    </source>
</reference>
<keyword id="KW-1003">Cell membrane</keyword>
<keyword id="KW-0472">Membrane</keyword>
<keyword id="KW-1185">Reference proteome</keyword>
<keyword id="KW-0812">Transmembrane</keyword>
<keyword id="KW-1133">Transmembrane helix</keyword>
<proteinExistence type="predicted"/>
<protein>
    <recommendedName>
        <fullName>Uncharacterized protein MT1626</fullName>
    </recommendedName>
</protein>
<name>Y1591_MYCTO</name>
<gene>
    <name type="ordered locus">MT1626</name>
</gene>
<organism>
    <name type="scientific">Mycobacterium tuberculosis (strain CDC 1551 / Oshkosh)</name>
    <dbReference type="NCBI Taxonomy" id="83331"/>
    <lineage>
        <taxon>Bacteria</taxon>
        <taxon>Bacillati</taxon>
        <taxon>Actinomycetota</taxon>
        <taxon>Actinomycetes</taxon>
        <taxon>Mycobacteriales</taxon>
        <taxon>Mycobacteriaceae</taxon>
        <taxon>Mycobacterium</taxon>
        <taxon>Mycobacterium tuberculosis complex</taxon>
    </lineage>
</organism>
<accession>P9WLT4</accession>
<accession>L0T8P8</accession>
<accession>O06599</accession>
<accession>O52590</accession>
<accession>P0A5F3</accession>
<dbReference type="EMBL" id="AE000516">
    <property type="protein sequence ID" value="AAK45894.1"/>
    <property type="molecule type" value="Genomic_DNA"/>
</dbReference>
<dbReference type="PIR" id="A70543">
    <property type="entry name" value="A70543"/>
</dbReference>
<dbReference type="KEGG" id="mtc:MT1626"/>
<dbReference type="HOGENOM" id="CLU_102917_0_0_11"/>
<dbReference type="Proteomes" id="UP000001020">
    <property type="component" value="Chromosome"/>
</dbReference>
<dbReference type="GO" id="GO:0005886">
    <property type="term" value="C:plasma membrane"/>
    <property type="evidence" value="ECO:0007669"/>
    <property type="project" value="UniProtKB-SubCell"/>
</dbReference>
<dbReference type="InterPro" id="IPR021213">
    <property type="entry name" value="DUF2567"/>
</dbReference>
<dbReference type="Pfam" id="PF10821">
    <property type="entry name" value="DUF2567"/>
    <property type="match status" value="1"/>
</dbReference>
<evidence type="ECO:0000255" key="1"/>
<evidence type="ECO:0000305" key="2"/>
<comment type="subcellular location">
    <subcellularLocation>
        <location evidence="2">Cell membrane</location>
        <topology evidence="2">Multi-pass membrane protein</topology>
    </subcellularLocation>
</comment>
<comment type="similarity">
    <text evidence="2">To M.leprae ML1222.</text>
</comment>
<feature type="chain" id="PRO_0000427423" description="Uncharacterized protein MT1626">
    <location>
        <begin position="1"/>
        <end position="193"/>
    </location>
</feature>
<feature type="transmembrane region" description="Helical" evidence="1">
    <location>
        <begin position="8"/>
        <end position="28"/>
    </location>
</feature>
<feature type="transmembrane region" description="Helical" evidence="1">
    <location>
        <begin position="46"/>
        <end position="66"/>
    </location>
</feature>
<feature type="transmembrane region" description="Helical" evidence="1">
    <location>
        <begin position="82"/>
        <end position="102"/>
    </location>
</feature>
<feature type="transmembrane region" description="Helical" evidence="1">
    <location>
        <begin position="141"/>
        <end position="161"/>
    </location>
</feature>